<gene>
    <name evidence="1" type="primary">ruvA</name>
    <name type="ordered locus">EC55989_2040</name>
</gene>
<evidence type="ECO:0000255" key="1">
    <source>
        <dbReference type="HAMAP-Rule" id="MF_00031"/>
    </source>
</evidence>
<sequence length="203" mass="22086">MIGRLRGIIIEKQPPLVLIEVGGVGYEVHMPMTCFYELPEAGQEAIVFTHFVVREDAQLLYGFNNKQERTLFKELIKTNGVGPKLALAILSGMSAQQFVNAVEREEVGALVKLPGIGKKTAERLIVEMKDRFKGLHGDLFTPAADLVLTSPASPATDDAEQEAVAALVALGYKPQEASRMVSKIARPDASSETLIREALRAAL</sequence>
<organism>
    <name type="scientific">Escherichia coli (strain 55989 / EAEC)</name>
    <dbReference type="NCBI Taxonomy" id="585055"/>
    <lineage>
        <taxon>Bacteria</taxon>
        <taxon>Pseudomonadati</taxon>
        <taxon>Pseudomonadota</taxon>
        <taxon>Gammaproteobacteria</taxon>
        <taxon>Enterobacterales</taxon>
        <taxon>Enterobacteriaceae</taxon>
        <taxon>Escherichia</taxon>
    </lineage>
</organism>
<reference key="1">
    <citation type="journal article" date="2009" name="PLoS Genet.">
        <title>Organised genome dynamics in the Escherichia coli species results in highly diverse adaptive paths.</title>
        <authorList>
            <person name="Touchon M."/>
            <person name="Hoede C."/>
            <person name="Tenaillon O."/>
            <person name="Barbe V."/>
            <person name="Baeriswyl S."/>
            <person name="Bidet P."/>
            <person name="Bingen E."/>
            <person name="Bonacorsi S."/>
            <person name="Bouchier C."/>
            <person name="Bouvet O."/>
            <person name="Calteau A."/>
            <person name="Chiapello H."/>
            <person name="Clermont O."/>
            <person name="Cruveiller S."/>
            <person name="Danchin A."/>
            <person name="Diard M."/>
            <person name="Dossat C."/>
            <person name="Karoui M.E."/>
            <person name="Frapy E."/>
            <person name="Garry L."/>
            <person name="Ghigo J.M."/>
            <person name="Gilles A.M."/>
            <person name="Johnson J."/>
            <person name="Le Bouguenec C."/>
            <person name="Lescat M."/>
            <person name="Mangenot S."/>
            <person name="Martinez-Jehanne V."/>
            <person name="Matic I."/>
            <person name="Nassif X."/>
            <person name="Oztas S."/>
            <person name="Petit M.A."/>
            <person name="Pichon C."/>
            <person name="Rouy Z."/>
            <person name="Ruf C.S."/>
            <person name="Schneider D."/>
            <person name="Tourret J."/>
            <person name="Vacherie B."/>
            <person name="Vallenet D."/>
            <person name="Medigue C."/>
            <person name="Rocha E.P.C."/>
            <person name="Denamur E."/>
        </authorList>
    </citation>
    <scope>NUCLEOTIDE SEQUENCE [LARGE SCALE GENOMIC DNA]</scope>
    <source>
        <strain>55989 / EAEC</strain>
    </source>
</reference>
<keyword id="KW-0963">Cytoplasm</keyword>
<keyword id="KW-0227">DNA damage</keyword>
<keyword id="KW-0233">DNA recombination</keyword>
<keyword id="KW-0234">DNA repair</keyword>
<keyword id="KW-0238">DNA-binding</keyword>
<keyword id="KW-1185">Reference proteome</keyword>
<keyword id="KW-0742">SOS response</keyword>
<dbReference type="EMBL" id="CU928145">
    <property type="protein sequence ID" value="CAU97898.1"/>
    <property type="molecule type" value="Genomic_DNA"/>
</dbReference>
<dbReference type="RefSeq" id="WP_000580323.1">
    <property type="nucleotide sequence ID" value="NZ_CP028304.1"/>
</dbReference>
<dbReference type="SMR" id="B7L7R4"/>
<dbReference type="GeneID" id="75057740"/>
<dbReference type="KEGG" id="eck:EC55989_2040"/>
<dbReference type="HOGENOM" id="CLU_087936_0_0_6"/>
<dbReference type="Proteomes" id="UP000000746">
    <property type="component" value="Chromosome"/>
</dbReference>
<dbReference type="GO" id="GO:0005737">
    <property type="term" value="C:cytoplasm"/>
    <property type="evidence" value="ECO:0007669"/>
    <property type="project" value="UniProtKB-SubCell"/>
</dbReference>
<dbReference type="GO" id="GO:0009379">
    <property type="term" value="C:Holliday junction helicase complex"/>
    <property type="evidence" value="ECO:0007669"/>
    <property type="project" value="InterPro"/>
</dbReference>
<dbReference type="GO" id="GO:0048476">
    <property type="term" value="C:Holliday junction resolvase complex"/>
    <property type="evidence" value="ECO:0007669"/>
    <property type="project" value="UniProtKB-UniRule"/>
</dbReference>
<dbReference type="GO" id="GO:0005524">
    <property type="term" value="F:ATP binding"/>
    <property type="evidence" value="ECO:0007669"/>
    <property type="project" value="InterPro"/>
</dbReference>
<dbReference type="GO" id="GO:0000400">
    <property type="term" value="F:four-way junction DNA binding"/>
    <property type="evidence" value="ECO:0007669"/>
    <property type="project" value="UniProtKB-UniRule"/>
</dbReference>
<dbReference type="GO" id="GO:0009378">
    <property type="term" value="F:four-way junction helicase activity"/>
    <property type="evidence" value="ECO:0007669"/>
    <property type="project" value="InterPro"/>
</dbReference>
<dbReference type="GO" id="GO:0006310">
    <property type="term" value="P:DNA recombination"/>
    <property type="evidence" value="ECO:0007669"/>
    <property type="project" value="UniProtKB-UniRule"/>
</dbReference>
<dbReference type="GO" id="GO:0006281">
    <property type="term" value="P:DNA repair"/>
    <property type="evidence" value="ECO:0007669"/>
    <property type="project" value="UniProtKB-UniRule"/>
</dbReference>
<dbReference type="GO" id="GO:0009432">
    <property type="term" value="P:SOS response"/>
    <property type="evidence" value="ECO:0007669"/>
    <property type="project" value="UniProtKB-UniRule"/>
</dbReference>
<dbReference type="CDD" id="cd14332">
    <property type="entry name" value="UBA_RuvA_C"/>
    <property type="match status" value="1"/>
</dbReference>
<dbReference type="FunFam" id="1.10.150.20:FF:000012">
    <property type="entry name" value="Holliday junction ATP-dependent DNA helicase RuvA"/>
    <property type="match status" value="1"/>
</dbReference>
<dbReference type="FunFam" id="1.10.8.10:FF:000008">
    <property type="entry name" value="Holliday junction ATP-dependent DNA helicase RuvA"/>
    <property type="match status" value="1"/>
</dbReference>
<dbReference type="FunFam" id="2.40.50.140:FF:000083">
    <property type="entry name" value="Holliday junction ATP-dependent DNA helicase RuvA"/>
    <property type="match status" value="1"/>
</dbReference>
<dbReference type="Gene3D" id="1.10.150.20">
    <property type="entry name" value="5' to 3' exonuclease, C-terminal subdomain"/>
    <property type="match status" value="1"/>
</dbReference>
<dbReference type="Gene3D" id="1.10.8.10">
    <property type="entry name" value="DNA helicase RuvA subunit, C-terminal domain"/>
    <property type="match status" value="1"/>
</dbReference>
<dbReference type="Gene3D" id="2.40.50.140">
    <property type="entry name" value="Nucleic acid-binding proteins"/>
    <property type="match status" value="1"/>
</dbReference>
<dbReference type="HAMAP" id="MF_00031">
    <property type="entry name" value="DNA_HJ_migration_RuvA"/>
    <property type="match status" value="1"/>
</dbReference>
<dbReference type="InterPro" id="IPR013849">
    <property type="entry name" value="DNA_helicase_Holl-junc_RuvA_I"/>
</dbReference>
<dbReference type="InterPro" id="IPR003583">
    <property type="entry name" value="Hlx-hairpin-Hlx_DNA-bd_motif"/>
</dbReference>
<dbReference type="InterPro" id="IPR012340">
    <property type="entry name" value="NA-bd_OB-fold"/>
</dbReference>
<dbReference type="InterPro" id="IPR000085">
    <property type="entry name" value="RuvA"/>
</dbReference>
<dbReference type="InterPro" id="IPR010994">
    <property type="entry name" value="RuvA_2-like"/>
</dbReference>
<dbReference type="InterPro" id="IPR011114">
    <property type="entry name" value="RuvA_C"/>
</dbReference>
<dbReference type="InterPro" id="IPR036267">
    <property type="entry name" value="RuvA_C_sf"/>
</dbReference>
<dbReference type="NCBIfam" id="TIGR00084">
    <property type="entry name" value="ruvA"/>
    <property type="match status" value="1"/>
</dbReference>
<dbReference type="Pfam" id="PF14520">
    <property type="entry name" value="HHH_5"/>
    <property type="match status" value="1"/>
</dbReference>
<dbReference type="Pfam" id="PF07499">
    <property type="entry name" value="RuvA_C"/>
    <property type="match status" value="1"/>
</dbReference>
<dbReference type="Pfam" id="PF01330">
    <property type="entry name" value="RuvA_N"/>
    <property type="match status" value="1"/>
</dbReference>
<dbReference type="SMART" id="SM00278">
    <property type="entry name" value="HhH1"/>
    <property type="match status" value="2"/>
</dbReference>
<dbReference type="SUPFAM" id="SSF46929">
    <property type="entry name" value="DNA helicase RuvA subunit, C-terminal domain"/>
    <property type="match status" value="1"/>
</dbReference>
<dbReference type="SUPFAM" id="SSF50249">
    <property type="entry name" value="Nucleic acid-binding proteins"/>
    <property type="match status" value="1"/>
</dbReference>
<dbReference type="SUPFAM" id="SSF47781">
    <property type="entry name" value="RuvA domain 2-like"/>
    <property type="match status" value="1"/>
</dbReference>
<name>RUVA_ECO55</name>
<comment type="function">
    <text evidence="1">The RuvA-RuvB-RuvC complex processes Holliday junction (HJ) DNA during genetic recombination and DNA repair, while the RuvA-RuvB complex plays an important role in the rescue of blocked DNA replication forks via replication fork reversal (RFR). RuvA specifically binds to HJ cruciform DNA, conferring on it an open structure. The RuvB hexamer acts as an ATP-dependent pump, pulling dsDNA into and through the RuvAB complex. HJ branch migration allows RuvC to scan DNA until it finds its consensus sequence, where it cleaves and resolves the cruciform DNA.</text>
</comment>
<comment type="subunit">
    <text evidence="1">Homotetramer. Forms an RuvA(8)-RuvB(12)-Holliday junction (HJ) complex. HJ DNA is sandwiched between 2 RuvA tetramers; dsDNA enters through RuvA and exits via RuvB. An RuvB hexamer assembles on each DNA strand where it exits the tetramer. Each RuvB hexamer is contacted by two RuvA subunits (via domain III) on 2 adjacent RuvB subunits; this complex drives branch migration. In the full resolvosome a probable DNA-RuvA(4)-RuvB(12)-RuvC(2) complex forms which resolves the HJ.</text>
</comment>
<comment type="subcellular location">
    <subcellularLocation>
        <location evidence="1">Cytoplasm</location>
    </subcellularLocation>
</comment>
<comment type="domain">
    <text evidence="1">Has three domains with a flexible linker between the domains II and III and assumes an 'L' shape. Domain III is highly mobile and contacts RuvB.</text>
</comment>
<comment type="similarity">
    <text evidence="1">Belongs to the RuvA family.</text>
</comment>
<proteinExistence type="inferred from homology"/>
<feature type="chain" id="PRO_1000195139" description="Holliday junction branch migration complex subunit RuvA">
    <location>
        <begin position="1"/>
        <end position="203"/>
    </location>
</feature>
<feature type="region of interest" description="Domain I" evidence="1">
    <location>
        <begin position="1"/>
        <end position="64"/>
    </location>
</feature>
<feature type="region of interest" description="Domain II" evidence="1">
    <location>
        <begin position="65"/>
        <end position="142"/>
    </location>
</feature>
<feature type="region of interest" description="Flexible linker" evidence="1">
    <location>
        <begin position="143"/>
        <end position="154"/>
    </location>
</feature>
<feature type="region of interest" description="Domain III" evidence="1">
    <location>
        <begin position="155"/>
        <end position="203"/>
    </location>
</feature>
<protein>
    <recommendedName>
        <fullName evidence="1">Holliday junction branch migration complex subunit RuvA</fullName>
    </recommendedName>
</protein>
<accession>B7L7R4</accession>